<gene>
    <name evidence="1" type="primary">mukF</name>
    <name type="ordered locus">SPA1806</name>
</gene>
<evidence type="ECO:0000255" key="1">
    <source>
        <dbReference type="HAMAP-Rule" id="MF_01803"/>
    </source>
</evidence>
<accession>Q5PGF9</accession>
<protein>
    <recommendedName>
        <fullName evidence="1">Chromosome partition protein MukF</fullName>
    </recommendedName>
</protein>
<sequence length="440" mass="50461">MSEFSQTVPELVAWARKNDFSISLPVDRLSFLLAVATLNGERLDGEMSEGELVDAFRHVSDAFEQTSETIGVRANNAINDMVRQRLLNRFTSEQAEGNAIYRLTPLGIGITDYYIRQREFSTLRLSMQLSIVAGELKRAADAAAEGGDEFHWHRNVYAPLKYSVAEIFDSIDLTQRIMDEQQQQVKDDIAQLLNKDWRAAISSCELLLSETSGTLRELQDTLEAAGDKLQANLLRIQDATMTHDDLHFVDRLVFDLQSKLDRIISWGQQSIDLWIGYDRHVHKFIRTAIDMDKNRVFAQRLRQSVQTYFDDPWALTYANADRLLDMRDEEMALRDDEVTGELPPDLEYEEFNEIREQLAAIIEEQLAIYKTRQTPLDLGLVVREYLAQYPRARHFDVARIVIDQAVRLGVAQADFTGLPAKWQPINDYGAKVQAHVIDKY</sequence>
<proteinExistence type="inferred from homology"/>
<reference key="1">
    <citation type="journal article" date="2004" name="Nat. Genet.">
        <title>Comparison of genome degradation in Paratyphi A and Typhi, human-restricted serovars of Salmonella enterica that cause typhoid.</title>
        <authorList>
            <person name="McClelland M."/>
            <person name="Sanderson K.E."/>
            <person name="Clifton S.W."/>
            <person name="Latreille P."/>
            <person name="Porwollik S."/>
            <person name="Sabo A."/>
            <person name="Meyer R."/>
            <person name="Bieri T."/>
            <person name="Ozersky P."/>
            <person name="McLellan M."/>
            <person name="Harkins C.R."/>
            <person name="Wang C."/>
            <person name="Nguyen C."/>
            <person name="Berghoff A."/>
            <person name="Elliott G."/>
            <person name="Kohlberg S."/>
            <person name="Strong C."/>
            <person name="Du F."/>
            <person name="Carter J."/>
            <person name="Kremizki C."/>
            <person name="Layman D."/>
            <person name="Leonard S."/>
            <person name="Sun H."/>
            <person name="Fulton L."/>
            <person name="Nash W."/>
            <person name="Miner T."/>
            <person name="Minx P."/>
            <person name="Delehaunty K."/>
            <person name="Fronick C."/>
            <person name="Magrini V."/>
            <person name="Nhan M."/>
            <person name="Warren W."/>
            <person name="Florea L."/>
            <person name="Spieth J."/>
            <person name="Wilson R.K."/>
        </authorList>
    </citation>
    <scope>NUCLEOTIDE SEQUENCE [LARGE SCALE GENOMIC DNA]</scope>
    <source>
        <strain>ATCC 9150 / SARB42</strain>
    </source>
</reference>
<keyword id="KW-0106">Calcium</keyword>
<keyword id="KW-0131">Cell cycle</keyword>
<keyword id="KW-0132">Cell division</keyword>
<keyword id="KW-0159">Chromosome partition</keyword>
<keyword id="KW-0963">Cytoplasm</keyword>
<keyword id="KW-0226">DNA condensation</keyword>
<comment type="function">
    <text evidence="1">Involved in chromosome condensation, segregation and cell cycle progression. May participate in facilitating chromosome segregation by condensation DNA from both sides of a centrally located replisome during cell division. Not required for mini-F plasmid partitioning. Probably acts via its interaction with MukB and MukE. Overexpression results in anucleate cells. It has a calcium binding activity.</text>
</comment>
<comment type="subunit">
    <text evidence="1">Interacts, and probably forms a ternary complex, with MukE and MukB via its C-terminal region. The complex formation is stimulated by calcium or magnesium. It is required for an interaction between MukE and MukB.</text>
</comment>
<comment type="subcellular location">
    <subcellularLocation>
        <location evidence="1">Cytoplasm</location>
        <location evidence="1">Nucleoid</location>
    </subcellularLocation>
    <text evidence="1">Restricted to the nucleoid region.</text>
</comment>
<comment type="similarity">
    <text evidence="1">Belongs to the MukF family.</text>
</comment>
<organism>
    <name type="scientific">Salmonella paratyphi A (strain ATCC 9150 / SARB42)</name>
    <dbReference type="NCBI Taxonomy" id="295319"/>
    <lineage>
        <taxon>Bacteria</taxon>
        <taxon>Pseudomonadati</taxon>
        <taxon>Pseudomonadota</taxon>
        <taxon>Gammaproteobacteria</taxon>
        <taxon>Enterobacterales</taxon>
        <taxon>Enterobacteriaceae</taxon>
        <taxon>Salmonella</taxon>
    </lineage>
</organism>
<feature type="chain" id="PRO_1000069938" description="Chromosome partition protein MukF">
    <location>
        <begin position="1"/>
        <end position="440"/>
    </location>
</feature>
<feature type="region of interest" description="Leucine-zipper">
    <location>
        <begin position="208"/>
        <end position="236"/>
    </location>
</feature>
<name>MUKF_SALPA</name>
<dbReference type="EMBL" id="CP000026">
    <property type="protein sequence ID" value="AAV77722.1"/>
    <property type="molecule type" value="Genomic_DNA"/>
</dbReference>
<dbReference type="RefSeq" id="WP_001288828.1">
    <property type="nucleotide sequence ID" value="NC_006511.1"/>
</dbReference>
<dbReference type="SMR" id="Q5PGF9"/>
<dbReference type="KEGG" id="spt:SPA1806"/>
<dbReference type="HOGENOM" id="CLU_049853_0_0_6"/>
<dbReference type="Proteomes" id="UP000008185">
    <property type="component" value="Chromosome"/>
</dbReference>
<dbReference type="GO" id="GO:0005737">
    <property type="term" value="C:cytoplasm"/>
    <property type="evidence" value="ECO:0007669"/>
    <property type="project" value="UniProtKB-UniRule"/>
</dbReference>
<dbReference type="GO" id="GO:0009295">
    <property type="term" value="C:nucleoid"/>
    <property type="evidence" value="ECO:0007669"/>
    <property type="project" value="UniProtKB-SubCell"/>
</dbReference>
<dbReference type="GO" id="GO:0005509">
    <property type="term" value="F:calcium ion binding"/>
    <property type="evidence" value="ECO:0007669"/>
    <property type="project" value="UniProtKB-UniRule"/>
</dbReference>
<dbReference type="GO" id="GO:0051301">
    <property type="term" value="P:cell division"/>
    <property type="evidence" value="ECO:0007669"/>
    <property type="project" value="UniProtKB-KW"/>
</dbReference>
<dbReference type="GO" id="GO:0030261">
    <property type="term" value="P:chromosome condensation"/>
    <property type="evidence" value="ECO:0007669"/>
    <property type="project" value="UniProtKB-KW"/>
</dbReference>
<dbReference type="GO" id="GO:0007059">
    <property type="term" value="P:chromosome segregation"/>
    <property type="evidence" value="ECO:0007669"/>
    <property type="project" value="UniProtKB-UniRule"/>
</dbReference>
<dbReference type="GO" id="GO:0006260">
    <property type="term" value="P:DNA replication"/>
    <property type="evidence" value="ECO:0007669"/>
    <property type="project" value="UniProtKB-UniRule"/>
</dbReference>
<dbReference type="CDD" id="cd16337">
    <property type="entry name" value="MukF_C"/>
    <property type="match status" value="1"/>
</dbReference>
<dbReference type="CDD" id="cd16335">
    <property type="entry name" value="MukF_N"/>
    <property type="match status" value="1"/>
</dbReference>
<dbReference type="Gene3D" id="1.20.58.590">
    <property type="entry name" value="Chromosome partition protein MukF, middle domain"/>
    <property type="match status" value="1"/>
</dbReference>
<dbReference type="Gene3D" id="1.10.225.40">
    <property type="entry name" value="MukF, C-terminal domain"/>
    <property type="match status" value="1"/>
</dbReference>
<dbReference type="Gene3D" id="1.10.10.10">
    <property type="entry name" value="Winged helix-like DNA-binding domain superfamily/Winged helix DNA-binding domain"/>
    <property type="match status" value="1"/>
</dbReference>
<dbReference type="HAMAP" id="MF_01803">
    <property type="entry name" value="MukF"/>
    <property type="match status" value="1"/>
</dbReference>
<dbReference type="InterPro" id="IPR005582">
    <property type="entry name" value="Chromosome_partition_MukF"/>
</dbReference>
<dbReference type="InterPro" id="IPR033441">
    <property type="entry name" value="MukF_C"/>
</dbReference>
<dbReference type="InterPro" id="IPR038198">
    <property type="entry name" value="MukF_C_sf"/>
</dbReference>
<dbReference type="InterPro" id="IPR033440">
    <property type="entry name" value="MukF_M"/>
</dbReference>
<dbReference type="InterPro" id="IPR036141">
    <property type="entry name" value="MukF_M_sp"/>
</dbReference>
<dbReference type="InterPro" id="IPR033439">
    <property type="entry name" value="MukF_WHTH"/>
</dbReference>
<dbReference type="InterPro" id="IPR036388">
    <property type="entry name" value="WH-like_DNA-bd_sf"/>
</dbReference>
<dbReference type="InterPro" id="IPR036390">
    <property type="entry name" value="WH_DNA-bd_sf"/>
</dbReference>
<dbReference type="NCBIfam" id="NF003615">
    <property type="entry name" value="PRK05260.1"/>
    <property type="match status" value="1"/>
</dbReference>
<dbReference type="Pfam" id="PF03882">
    <property type="entry name" value="KicB"/>
    <property type="match status" value="1"/>
</dbReference>
<dbReference type="Pfam" id="PF17193">
    <property type="entry name" value="MukF_C"/>
    <property type="match status" value="1"/>
</dbReference>
<dbReference type="Pfam" id="PF17192">
    <property type="entry name" value="MukF_M"/>
    <property type="match status" value="1"/>
</dbReference>
<dbReference type="PIRSF" id="PIRSF018282">
    <property type="entry name" value="MukF"/>
    <property type="match status" value="1"/>
</dbReference>
<dbReference type="SUPFAM" id="SSF140570">
    <property type="entry name" value="MukF C-terminal domain-like"/>
    <property type="match status" value="1"/>
</dbReference>
<dbReference type="SUPFAM" id="SSF46785">
    <property type="entry name" value="Winged helix' DNA-binding domain"/>
    <property type="match status" value="1"/>
</dbReference>